<name>SYG1_YEAST</name>
<gene>
    <name type="primary">SYG1</name>
    <name type="ordered locus">YIL047C</name>
</gene>
<reference key="1">
    <citation type="journal article" date="1995" name="J. Biol. Chem.">
        <title>Truncated forms of a novel yeast protein suppress the lethality of a G protein alpha subunit deficiency by interacting with the beta subunit.</title>
        <authorList>
            <person name="Spain B.H."/>
            <person name="Koo D."/>
            <person name="Ramakrishnan M."/>
            <person name="Dzudzor B."/>
            <person name="Colicelli J."/>
        </authorList>
    </citation>
    <scope>NUCLEOTIDE SEQUENCE [GENOMIC DNA]</scope>
    <scope>FUNCTION</scope>
    <scope>SUBCELLULAR LOCATION</scope>
    <scope>INTERACTION WITH STE4</scope>
    <source>
        <strain>SP1</strain>
    </source>
</reference>
<reference key="2">
    <citation type="journal article" date="1997" name="Nature">
        <title>The nucleotide sequence of Saccharomyces cerevisiae chromosome IX.</title>
        <authorList>
            <person name="Churcher C.M."/>
            <person name="Bowman S."/>
            <person name="Badcock K."/>
            <person name="Bankier A.T."/>
            <person name="Brown D."/>
            <person name="Chillingworth T."/>
            <person name="Connor R."/>
            <person name="Devlin K."/>
            <person name="Gentles S."/>
            <person name="Hamlin N."/>
            <person name="Harris D.E."/>
            <person name="Horsnell T."/>
            <person name="Hunt S."/>
            <person name="Jagels K."/>
            <person name="Jones M."/>
            <person name="Lye G."/>
            <person name="Moule S."/>
            <person name="Odell C."/>
            <person name="Pearson D."/>
            <person name="Rajandream M.A."/>
            <person name="Rice P."/>
            <person name="Rowley N."/>
            <person name="Skelton J."/>
            <person name="Smith V."/>
            <person name="Walsh S.V."/>
            <person name="Whitehead S."/>
            <person name="Barrell B.G."/>
        </authorList>
    </citation>
    <scope>NUCLEOTIDE SEQUENCE [LARGE SCALE GENOMIC DNA]</scope>
    <source>
        <strain>ATCC 204508 / S288c</strain>
    </source>
</reference>
<reference key="3">
    <citation type="journal article" date="2014" name="G3 (Bethesda)">
        <title>The reference genome sequence of Saccharomyces cerevisiae: Then and now.</title>
        <authorList>
            <person name="Engel S.R."/>
            <person name="Dietrich F.S."/>
            <person name="Fisk D.G."/>
            <person name="Binkley G."/>
            <person name="Balakrishnan R."/>
            <person name="Costanzo M.C."/>
            <person name="Dwight S.S."/>
            <person name="Hitz B.C."/>
            <person name="Karra K."/>
            <person name="Nash R.S."/>
            <person name="Weng S."/>
            <person name="Wong E.D."/>
            <person name="Lloyd P."/>
            <person name="Skrzypek M.S."/>
            <person name="Miyasato S.R."/>
            <person name="Simison M."/>
            <person name="Cherry J.M."/>
        </authorList>
    </citation>
    <scope>GENOME REANNOTATION</scope>
    <source>
        <strain>ATCC 204508 / S288c</strain>
    </source>
</reference>
<reference key="4">
    <citation type="journal article" date="2003" name="Nature">
        <title>Global analysis of protein expression in yeast.</title>
        <authorList>
            <person name="Ghaemmaghami S."/>
            <person name="Huh W.-K."/>
            <person name="Bower K."/>
            <person name="Howson R.W."/>
            <person name="Belle A."/>
            <person name="Dephoure N."/>
            <person name="O'Shea E.K."/>
            <person name="Weissman J.S."/>
        </authorList>
    </citation>
    <scope>LEVEL OF PROTEIN EXPRESSION [LARGE SCALE ANALYSIS]</scope>
</reference>
<reference key="5">
    <citation type="journal article" date="2006" name="Proc. Natl. Acad. Sci. U.S.A.">
        <title>A global topology map of the Saccharomyces cerevisiae membrane proteome.</title>
        <authorList>
            <person name="Kim H."/>
            <person name="Melen K."/>
            <person name="Oesterberg M."/>
            <person name="von Heijne G."/>
        </authorList>
    </citation>
    <scope>TOPOLOGY [LARGE SCALE ANALYSIS]</scope>
    <source>
        <strain>ATCC 208353 / W303-1A</strain>
    </source>
</reference>
<reference key="6">
    <citation type="journal article" date="2007" name="J. Proteome Res.">
        <title>Large-scale phosphorylation analysis of alpha-factor-arrested Saccharomyces cerevisiae.</title>
        <authorList>
            <person name="Li X."/>
            <person name="Gerber S.A."/>
            <person name="Rudner A.D."/>
            <person name="Beausoleil S.A."/>
            <person name="Haas W."/>
            <person name="Villen J."/>
            <person name="Elias J.E."/>
            <person name="Gygi S.P."/>
        </authorList>
    </citation>
    <scope>PHOSPHORYLATION [LARGE SCALE ANALYSIS] AT SER-859 AND SER-860</scope>
    <scope>IDENTIFICATION BY MASS SPECTROMETRY [LARGE SCALE ANALYSIS]</scope>
    <source>
        <strain>ADR376</strain>
    </source>
</reference>
<reference key="7">
    <citation type="journal article" date="2008" name="Mol. Cell. Proteomics">
        <title>A multidimensional chromatography technology for in-depth phosphoproteome analysis.</title>
        <authorList>
            <person name="Albuquerque C.P."/>
            <person name="Smolka M.B."/>
            <person name="Payne S.H."/>
            <person name="Bafna V."/>
            <person name="Eng J."/>
            <person name="Zhou H."/>
        </authorList>
    </citation>
    <scope>PHOSPHORYLATION [LARGE SCALE ANALYSIS] AT SER-172 AND SER-179</scope>
    <scope>IDENTIFICATION BY MASS SPECTROMETRY [LARGE SCALE ANALYSIS]</scope>
</reference>
<reference key="8">
    <citation type="journal article" date="2009" name="Science">
        <title>Global analysis of Cdk1 substrate phosphorylation sites provides insights into evolution.</title>
        <authorList>
            <person name="Holt L.J."/>
            <person name="Tuch B.B."/>
            <person name="Villen J."/>
            <person name="Johnson A.D."/>
            <person name="Gygi S.P."/>
            <person name="Morgan D.O."/>
        </authorList>
    </citation>
    <scope>PHOSPHORYLATION [LARGE SCALE ANALYSIS] AT SER-859 AND SER-860</scope>
    <scope>IDENTIFICATION BY MASS SPECTROMETRY [LARGE SCALE ANALYSIS]</scope>
</reference>
<sequence length="902" mass="104218">MKFADHLTESAIPEWRDKYIDYKVGKKKLRRYKEKLDAEEEQSSSYRSWMPSVSVYQTAFQQREPGKSRSDGDYRSGPAFKKDYSALQREFVADFIEDWLISFQLSKCNEFYLWLLKECDKKFEVLQSQLHYYSLQKNYERDNLNRSSSNVDMSTSLYAAGLAGRSDSRVNSIDSDSRSVMYGSMPCTKEAKKPRLSLLAYCQKVLKDNRLLPSWPKRGFSLLQDLRQDASSRGRETFAFGASFLETMTTTQARNLLSNAIIEYYLYLQLVKSFRDINVTGFRKMVKKFDKTCHTRELTTFMSYARTHYTLFKHADANVQLVAQKMQQITSSQPTPTSELSSAQRDKEPITWLETQITEWFTTALTNSPKDRKHNTHKLKKLTIQYSISEQMVHRNNRSIVQMLVVGLGIGVSMTLITYTLYLGISSEETSFTHKILFPLWGGWYMVLLIAFLFLVNCFIWHRTGINYRFIMLGEIQSKNGTQFFNNDFATSKIPLKLYFLTFFIVPCAVCSMLSFALEKLTPLGFLYIGIVSFLFLCPSGLIPYWDKVVHTRKWLVVTLIRLMMSGFFPVEFGDFFLGDIICSLTYSIADIAMFFCVYSHTPNNLCGSSHSRAMGVLSCLPSYWRFMQCLRRFADSGDWFPHLLNAAKYTLGIAYNATLCAYRLSDRSEQRRTPFIVCATLNSILTSAWDLVMDWSFAHNTTSYNWLLRDDLYLAGKKNWENGSYSFSRKLVYYFAMIWDILIRFEWIVYAIAPQTIQQSAVTSFILALLEVLRRFVWIIFRVENEHVANVHLFRVTGDAPLPYPIAQVGDDSMDSSDLGSKAFSSLNDIPITPSHDNNPHSFAEPMPAYRGTFRRRSSVFENISRSIPWAHATDFQRPTVNTVDDRSPETDSESEVESIM</sequence>
<proteinExistence type="evidence at protein level"/>
<keyword id="KW-1003">Cell membrane</keyword>
<keyword id="KW-0472">Membrane</keyword>
<keyword id="KW-0597">Phosphoprotein</keyword>
<keyword id="KW-1185">Reference proteome</keyword>
<keyword id="KW-0812">Transmembrane</keyword>
<keyword id="KW-1133">Transmembrane helix</keyword>
<evidence type="ECO:0000255" key="1"/>
<evidence type="ECO:0000255" key="2">
    <source>
        <dbReference type="PROSITE-ProRule" id="PRU00712"/>
    </source>
</evidence>
<evidence type="ECO:0000255" key="3">
    <source>
        <dbReference type="PROSITE-ProRule" id="PRU00714"/>
    </source>
</evidence>
<evidence type="ECO:0000256" key="4">
    <source>
        <dbReference type="SAM" id="MobiDB-lite"/>
    </source>
</evidence>
<evidence type="ECO:0000269" key="5">
    <source>
    </source>
</evidence>
<evidence type="ECO:0000269" key="6">
    <source>
    </source>
</evidence>
<evidence type="ECO:0000305" key="7"/>
<evidence type="ECO:0007744" key="8">
    <source>
    </source>
</evidence>
<evidence type="ECO:0007744" key="9">
    <source>
    </source>
</evidence>
<evidence type="ECO:0007744" key="10">
    <source>
    </source>
</evidence>
<protein>
    <recommendedName>
        <fullName>Protein SYG1</fullName>
    </recommendedName>
</protein>
<accession>P40528</accession>
<accession>D6VVN4</accession>
<accession>P40964</accession>
<dbReference type="EMBL" id="U14726">
    <property type="protein sequence ID" value="AAA91621.1"/>
    <property type="molecule type" value="Genomic_DNA"/>
</dbReference>
<dbReference type="EMBL" id="Z46861">
    <property type="protein sequence ID" value="CAA86904.1"/>
    <property type="molecule type" value="Genomic_DNA"/>
</dbReference>
<dbReference type="EMBL" id="BK006942">
    <property type="protein sequence ID" value="DAA08500.1"/>
    <property type="molecule type" value="Genomic_DNA"/>
</dbReference>
<dbReference type="PIR" id="S49931">
    <property type="entry name" value="S49931"/>
</dbReference>
<dbReference type="RefSeq" id="NP_012217.3">
    <property type="nucleotide sequence ID" value="NM_001179397.3"/>
</dbReference>
<dbReference type="SMR" id="P40528"/>
<dbReference type="BioGRID" id="34943">
    <property type="interactions" value="122"/>
</dbReference>
<dbReference type="DIP" id="DIP-2383N"/>
<dbReference type="FunCoup" id="P40528">
    <property type="interactions" value="695"/>
</dbReference>
<dbReference type="IntAct" id="P40528">
    <property type="interactions" value="30"/>
</dbReference>
<dbReference type="MINT" id="P40528"/>
<dbReference type="STRING" id="4932.YIL047C"/>
<dbReference type="GlyGen" id="P40528">
    <property type="glycosylation" value="2 sites"/>
</dbReference>
<dbReference type="iPTMnet" id="P40528"/>
<dbReference type="PaxDb" id="4932-YIL047C"/>
<dbReference type="PeptideAtlas" id="P40528"/>
<dbReference type="EnsemblFungi" id="YIL047C_mRNA">
    <property type="protein sequence ID" value="YIL047C"/>
    <property type="gene ID" value="YIL047C"/>
</dbReference>
<dbReference type="GeneID" id="854764"/>
<dbReference type="KEGG" id="sce:YIL047C"/>
<dbReference type="AGR" id="SGD:S000001309"/>
<dbReference type="SGD" id="S000001309">
    <property type="gene designation" value="SYG1"/>
</dbReference>
<dbReference type="VEuPathDB" id="FungiDB:YIL047C"/>
<dbReference type="eggNOG" id="KOG1162">
    <property type="taxonomic scope" value="Eukaryota"/>
</dbReference>
<dbReference type="GeneTree" id="ENSGT00500000044895"/>
<dbReference type="HOGENOM" id="CLU_006116_1_1_1"/>
<dbReference type="InParanoid" id="P40528"/>
<dbReference type="OMA" id="SIPWAHA"/>
<dbReference type="OrthoDB" id="9970435at2759"/>
<dbReference type="BioCyc" id="YEAST:G3O-31318-MONOMER"/>
<dbReference type="BioGRID-ORCS" id="854764">
    <property type="hits" value="4 hits in 10 CRISPR screens"/>
</dbReference>
<dbReference type="PRO" id="PR:P40528"/>
<dbReference type="Proteomes" id="UP000002311">
    <property type="component" value="Chromosome IX"/>
</dbReference>
<dbReference type="RNAct" id="P40528">
    <property type="molecule type" value="protein"/>
</dbReference>
<dbReference type="GO" id="GO:0000329">
    <property type="term" value="C:fungal-type vacuole membrane"/>
    <property type="evidence" value="ECO:0007005"/>
    <property type="project" value="SGD"/>
</dbReference>
<dbReference type="GO" id="GO:0005739">
    <property type="term" value="C:mitochondrion"/>
    <property type="evidence" value="ECO:0007005"/>
    <property type="project" value="SGD"/>
</dbReference>
<dbReference type="GO" id="GO:0005886">
    <property type="term" value="C:plasma membrane"/>
    <property type="evidence" value="ECO:0000314"/>
    <property type="project" value="SGD"/>
</dbReference>
<dbReference type="GO" id="GO:0000822">
    <property type="term" value="F:inositol hexakisphosphate binding"/>
    <property type="evidence" value="ECO:0000318"/>
    <property type="project" value="GO_Central"/>
</dbReference>
<dbReference type="GO" id="GO:0005315">
    <property type="term" value="F:phosphate transmembrane transporter activity"/>
    <property type="evidence" value="ECO:0000318"/>
    <property type="project" value="GO_Central"/>
</dbReference>
<dbReference type="GO" id="GO:0016036">
    <property type="term" value="P:cellular response to phosphate starvation"/>
    <property type="evidence" value="ECO:0000318"/>
    <property type="project" value="GO_Central"/>
</dbReference>
<dbReference type="GO" id="GO:0006817">
    <property type="term" value="P:phosphate ion transport"/>
    <property type="evidence" value="ECO:0000318"/>
    <property type="project" value="GO_Central"/>
</dbReference>
<dbReference type="GO" id="GO:0007165">
    <property type="term" value="P:signal transduction"/>
    <property type="evidence" value="ECO:0000315"/>
    <property type="project" value="SGD"/>
</dbReference>
<dbReference type="CDD" id="cd14475">
    <property type="entry name" value="SPX_SYG1_like"/>
    <property type="match status" value="1"/>
</dbReference>
<dbReference type="InterPro" id="IPR004342">
    <property type="entry name" value="EXS_C"/>
</dbReference>
<dbReference type="InterPro" id="IPR004331">
    <property type="entry name" value="SPX_dom"/>
</dbReference>
<dbReference type="PANTHER" id="PTHR10783:SF103">
    <property type="entry name" value="SOLUTE CARRIER FAMILY 53 MEMBER 1"/>
    <property type="match status" value="1"/>
</dbReference>
<dbReference type="PANTHER" id="PTHR10783">
    <property type="entry name" value="XENOTROPIC AND POLYTROPIC RETROVIRUS RECEPTOR 1-RELATED"/>
    <property type="match status" value="1"/>
</dbReference>
<dbReference type="Pfam" id="PF03124">
    <property type="entry name" value="EXS"/>
    <property type="match status" value="1"/>
</dbReference>
<dbReference type="Pfam" id="PF03105">
    <property type="entry name" value="SPX"/>
    <property type="match status" value="1"/>
</dbReference>
<dbReference type="PROSITE" id="PS51380">
    <property type="entry name" value="EXS"/>
    <property type="match status" value="1"/>
</dbReference>
<dbReference type="PROSITE" id="PS51382">
    <property type="entry name" value="SPX"/>
    <property type="match status" value="1"/>
</dbReference>
<comment type="function">
    <text evidence="6">May function in G-protein coupled signal transduction.</text>
</comment>
<comment type="subcellular location">
    <subcellularLocation>
        <location evidence="6">Cell membrane</location>
        <topology evidence="6">Multi-pass membrane protein</topology>
    </subcellularLocation>
</comment>
<comment type="miscellaneous">
    <text evidence="5">Present with 1160 molecules/cell in log phase SD medium.</text>
</comment>
<comment type="similarity">
    <text evidence="7">Belongs to the SYG1 (TC 2.A.94) family.</text>
</comment>
<feature type="chain" id="PRO_0000072382" description="Protein SYG1">
    <location>
        <begin position="1"/>
        <end position="902"/>
    </location>
</feature>
<feature type="topological domain" description="Cytoplasmic" evidence="1">
    <location>
        <begin position="1"/>
        <end position="404"/>
    </location>
</feature>
<feature type="transmembrane region" description="Helical" evidence="1">
    <location>
        <begin position="405"/>
        <end position="425"/>
    </location>
</feature>
<feature type="topological domain" description="Extracellular" evidence="1">
    <location>
        <begin position="426"/>
        <end position="435"/>
    </location>
</feature>
<feature type="transmembrane region" description="Helical" evidence="1">
    <location>
        <begin position="436"/>
        <end position="456"/>
    </location>
</feature>
<feature type="topological domain" description="Cytoplasmic" evidence="1">
    <location>
        <begin position="457"/>
        <end position="497"/>
    </location>
</feature>
<feature type="transmembrane region" description="Helical" evidence="1">
    <location>
        <begin position="498"/>
        <end position="518"/>
    </location>
</feature>
<feature type="topological domain" description="Extracellular" evidence="1">
    <location>
        <begin position="519"/>
        <end position="522"/>
    </location>
</feature>
<feature type="transmembrane region" description="Helical" evidence="1">
    <location>
        <begin position="523"/>
        <end position="543"/>
    </location>
</feature>
<feature type="topological domain" description="Cytoplasmic" evidence="1">
    <location>
        <begin position="544"/>
        <end position="554"/>
    </location>
</feature>
<feature type="transmembrane region" description="Helical" evidence="1">
    <location>
        <begin position="555"/>
        <end position="575"/>
    </location>
</feature>
<feature type="topological domain" description="Extracellular" evidence="1">
    <location>
        <position position="576"/>
    </location>
</feature>
<feature type="transmembrane region" description="Helical" evidence="1">
    <location>
        <begin position="577"/>
        <end position="599"/>
    </location>
</feature>
<feature type="topological domain" description="Cytoplasmic" evidence="1">
    <location>
        <begin position="600"/>
        <end position="732"/>
    </location>
</feature>
<feature type="transmembrane region" description="Helical" evidence="1">
    <location>
        <begin position="733"/>
        <end position="753"/>
    </location>
</feature>
<feature type="topological domain" description="Extracellular" evidence="1">
    <location>
        <begin position="754"/>
        <end position="761"/>
    </location>
</feature>
<feature type="transmembrane region" description="Helical" evidence="1">
    <location>
        <begin position="762"/>
        <end position="782"/>
    </location>
</feature>
<feature type="topological domain" description="Cytoplasmic" evidence="1">
    <location>
        <begin position="783"/>
        <end position="902"/>
    </location>
</feature>
<feature type="domain" description="SPX" evidence="3">
    <location>
        <begin position="1"/>
        <end position="303"/>
    </location>
</feature>
<feature type="domain" description="EXS" evidence="2">
    <location>
        <begin position="606"/>
        <end position="815"/>
    </location>
</feature>
<feature type="region of interest" description="Disordered" evidence="4">
    <location>
        <begin position="882"/>
        <end position="902"/>
    </location>
</feature>
<feature type="compositionally biased region" description="Acidic residues" evidence="4">
    <location>
        <begin position="892"/>
        <end position="902"/>
    </location>
</feature>
<feature type="modified residue" description="Phosphoserine" evidence="9">
    <location>
        <position position="172"/>
    </location>
</feature>
<feature type="modified residue" description="Phosphoserine" evidence="9">
    <location>
        <position position="179"/>
    </location>
</feature>
<feature type="modified residue" description="Phosphoserine" evidence="8 10">
    <location>
        <position position="859"/>
    </location>
</feature>
<feature type="modified residue" description="Phosphoserine" evidence="8 10">
    <location>
        <position position="860"/>
    </location>
</feature>
<organism>
    <name type="scientific">Saccharomyces cerevisiae (strain ATCC 204508 / S288c)</name>
    <name type="common">Baker's yeast</name>
    <dbReference type="NCBI Taxonomy" id="559292"/>
    <lineage>
        <taxon>Eukaryota</taxon>
        <taxon>Fungi</taxon>
        <taxon>Dikarya</taxon>
        <taxon>Ascomycota</taxon>
        <taxon>Saccharomycotina</taxon>
        <taxon>Saccharomycetes</taxon>
        <taxon>Saccharomycetales</taxon>
        <taxon>Saccharomycetaceae</taxon>
        <taxon>Saccharomyces</taxon>
    </lineage>
</organism>